<accession>Q5HQV3</accession>
<organism>
    <name type="scientific">Staphylococcus epidermidis (strain ATCC 35984 / DSM 28319 / BCRC 17069 / CCUG 31568 / BM 3577 / RP62A)</name>
    <dbReference type="NCBI Taxonomy" id="176279"/>
    <lineage>
        <taxon>Bacteria</taxon>
        <taxon>Bacillati</taxon>
        <taxon>Bacillota</taxon>
        <taxon>Bacilli</taxon>
        <taxon>Bacillales</taxon>
        <taxon>Staphylococcaceae</taxon>
        <taxon>Staphylococcus</taxon>
    </lineage>
</organism>
<protein>
    <recommendedName>
        <fullName evidence="1">Phosphoglycerate kinase</fullName>
        <ecNumber evidence="1">2.7.2.3</ecNumber>
    </recommendedName>
</protein>
<sequence>MAKKIVSDLDLKGKVVLERADFNVPIKDGEITNDNRIVQALPTIEYIIEQGGKLVLFSHLGKVKEESDKEGLSLKPVAENLSKKLGKEVIFVPETRGEKLETAIENLNEGDVLLVENTRFEDLDGKKESKNDPELGKYWASLGDVFVNDAFGTAHREHASNVGISTHLETAAGYLMEKEIKFIGGVVNDPQKPVVAILGGAKVSDKINVIKNLVNIADKILIGGGMAYTFIKAQGKEIGLSLLEEDKIDFAKDLLENNGDQIVLPVDCKIAKEFSNDAKITEVSINEIPSDQEAMDIGPKTVELFNKELQGAHTVVWNGPMGVFEFSNFAKGTIGVCESIAKLEDATTIIGGGDSAAAAISLGFEDDFTHISTGGGASLEYLEGKELPGIKAINDK</sequence>
<reference key="1">
    <citation type="journal article" date="2005" name="J. Bacteriol.">
        <title>Insights on evolution of virulence and resistance from the complete genome analysis of an early methicillin-resistant Staphylococcus aureus strain and a biofilm-producing methicillin-resistant Staphylococcus epidermidis strain.</title>
        <authorList>
            <person name="Gill S.R."/>
            <person name="Fouts D.E."/>
            <person name="Archer G.L."/>
            <person name="Mongodin E.F."/>
            <person name="DeBoy R.T."/>
            <person name="Ravel J."/>
            <person name="Paulsen I.T."/>
            <person name="Kolonay J.F."/>
            <person name="Brinkac L.M."/>
            <person name="Beanan M.J."/>
            <person name="Dodson R.J."/>
            <person name="Daugherty S.C."/>
            <person name="Madupu R."/>
            <person name="Angiuoli S.V."/>
            <person name="Durkin A.S."/>
            <person name="Haft D.H."/>
            <person name="Vamathevan J.J."/>
            <person name="Khouri H."/>
            <person name="Utterback T.R."/>
            <person name="Lee C."/>
            <person name="Dimitrov G."/>
            <person name="Jiang L."/>
            <person name="Qin H."/>
            <person name="Weidman J."/>
            <person name="Tran K."/>
            <person name="Kang K.H."/>
            <person name="Hance I.R."/>
            <person name="Nelson K.E."/>
            <person name="Fraser C.M."/>
        </authorList>
    </citation>
    <scope>NUCLEOTIDE SEQUENCE [LARGE SCALE GENOMIC DNA]</scope>
    <source>
        <strain>ATCC 35984 / DSM 28319 / BCRC 17069 / CCUG 31568 / BM 3577 / RP62A</strain>
    </source>
</reference>
<dbReference type="EC" id="2.7.2.3" evidence="1"/>
<dbReference type="EMBL" id="CP000029">
    <property type="protein sequence ID" value="AAW53874.1"/>
    <property type="molecule type" value="Genomic_DNA"/>
</dbReference>
<dbReference type="RefSeq" id="WP_001829665.1">
    <property type="nucleotide sequence ID" value="NC_002976.3"/>
</dbReference>
<dbReference type="SMR" id="Q5HQV3"/>
<dbReference type="STRING" id="176279.SERP0443"/>
<dbReference type="KEGG" id="ser:SERP0443"/>
<dbReference type="eggNOG" id="COG0126">
    <property type="taxonomic scope" value="Bacteria"/>
</dbReference>
<dbReference type="HOGENOM" id="CLU_025427_0_2_9"/>
<dbReference type="UniPathway" id="UPA00109">
    <property type="reaction ID" value="UER00185"/>
</dbReference>
<dbReference type="Proteomes" id="UP000000531">
    <property type="component" value="Chromosome"/>
</dbReference>
<dbReference type="GO" id="GO:0005829">
    <property type="term" value="C:cytosol"/>
    <property type="evidence" value="ECO:0007669"/>
    <property type="project" value="TreeGrafter"/>
</dbReference>
<dbReference type="GO" id="GO:0043531">
    <property type="term" value="F:ADP binding"/>
    <property type="evidence" value="ECO:0007669"/>
    <property type="project" value="TreeGrafter"/>
</dbReference>
<dbReference type="GO" id="GO:0005524">
    <property type="term" value="F:ATP binding"/>
    <property type="evidence" value="ECO:0007669"/>
    <property type="project" value="UniProtKB-KW"/>
</dbReference>
<dbReference type="GO" id="GO:0004618">
    <property type="term" value="F:phosphoglycerate kinase activity"/>
    <property type="evidence" value="ECO:0007669"/>
    <property type="project" value="UniProtKB-UniRule"/>
</dbReference>
<dbReference type="GO" id="GO:0006094">
    <property type="term" value="P:gluconeogenesis"/>
    <property type="evidence" value="ECO:0007669"/>
    <property type="project" value="TreeGrafter"/>
</dbReference>
<dbReference type="GO" id="GO:0006096">
    <property type="term" value="P:glycolytic process"/>
    <property type="evidence" value="ECO:0007669"/>
    <property type="project" value="UniProtKB-UniRule"/>
</dbReference>
<dbReference type="CDD" id="cd00318">
    <property type="entry name" value="Phosphoglycerate_kinase"/>
    <property type="match status" value="1"/>
</dbReference>
<dbReference type="FunFam" id="3.40.50.1260:FF:000001">
    <property type="entry name" value="Phosphoglycerate kinase"/>
    <property type="match status" value="1"/>
</dbReference>
<dbReference type="FunFam" id="3.40.50.1260:FF:000008">
    <property type="entry name" value="Phosphoglycerate kinase"/>
    <property type="match status" value="1"/>
</dbReference>
<dbReference type="Gene3D" id="3.40.50.1260">
    <property type="entry name" value="Phosphoglycerate kinase, N-terminal domain"/>
    <property type="match status" value="2"/>
</dbReference>
<dbReference type="HAMAP" id="MF_00145">
    <property type="entry name" value="Phosphoglyc_kinase"/>
    <property type="match status" value="1"/>
</dbReference>
<dbReference type="InterPro" id="IPR001576">
    <property type="entry name" value="Phosphoglycerate_kinase"/>
</dbReference>
<dbReference type="InterPro" id="IPR015824">
    <property type="entry name" value="Phosphoglycerate_kinase_N"/>
</dbReference>
<dbReference type="InterPro" id="IPR036043">
    <property type="entry name" value="Phosphoglycerate_kinase_sf"/>
</dbReference>
<dbReference type="PANTHER" id="PTHR11406">
    <property type="entry name" value="PHOSPHOGLYCERATE KINASE"/>
    <property type="match status" value="1"/>
</dbReference>
<dbReference type="PANTHER" id="PTHR11406:SF23">
    <property type="entry name" value="PHOSPHOGLYCERATE KINASE 1, CHLOROPLASTIC-RELATED"/>
    <property type="match status" value="1"/>
</dbReference>
<dbReference type="Pfam" id="PF00162">
    <property type="entry name" value="PGK"/>
    <property type="match status" value="1"/>
</dbReference>
<dbReference type="PIRSF" id="PIRSF000724">
    <property type="entry name" value="Pgk"/>
    <property type="match status" value="1"/>
</dbReference>
<dbReference type="PRINTS" id="PR00477">
    <property type="entry name" value="PHGLYCKINASE"/>
</dbReference>
<dbReference type="SUPFAM" id="SSF53748">
    <property type="entry name" value="Phosphoglycerate kinase"/>
    <property type="match status" value="1"/>
</dbReference>
<feature type="chain" id="PRO_0000146009" description="Phosphoglycerate kinase">
    <location>
        <begin position="1"/>
        <end position="396"/>
    </location>
</feature>
<feature type="binding site" evidence="1">
    <location>
        <begin position="21"/>
        <end position="23"/>
    </location>
    <ligand>
        <name>substrate</name>
    </ligand>
</feature>
<feature type="binding site" evidence="1">
    <location>
        <position position="36"/>
    </location>
    <ligand>
        <name>substrate</name>
    </ligand>
</feature>
<feature type="binding site" evidence="1">
    <location>
        <begin position="59"/>
        <end position="62"/>
    </location>
    <ligand>
        <name>substrate</name>
    </ligand>
</feature>
<feature type="binding site" evidence="1">
    <location>
        <position position="119"/>
    </location>
    <ligand>
        <name>substrate</name>
    </ligand>
</feature>
<feature type="binding site" evidence="1">
    <location>
        <position position="156"/>
    </location>
    <ligand>
        <name>substrate</name>
    </ligand>
</feature>
<feature type="binding site" evidence="1">
    <location>
        <position position="206"/>
    </location>
    <ligand>
        <name>ATP</name>
        <dbReference type="ChEBI" id="CHEBI:30616"/>
    </ligand>
</feature>
<feature type="binding site" evidence="1">
    <location>
        <position position="325"/>
    </location>
    <ligand>
        <name>ATP</name>
        <dbReference type="ChEBI" id="CHEBI:30616"/>
    </ligand>
</feature>
<feature type="binding site" evidence="1">
    <location>
        <begin position="352"/>
        <end position="355"/>
    </location>
    <ligand>
        <name>ATP</name>
        <dbReference type="ChEBI" id="CHEBI:30616"/>
    </ligand>
</feature>
<name>PGK_STAEQ</name>
<proteinExistence type="inferred from homology"/>
<evidence type="ECO:0000255" key="1">
    <source>
        <dbReference type="HAMAP-Rule" id="MF_00145"/>
    </source>
</evidence>
<comment type="catalytic activity">
    <reaction evidence="1">
        <text>(2R)-3-phosphoglycerate + ATP = (2R)-3-phospho-glyceroyl phosphate + ADP</text>
        <dbReference type="Rhea" id="RHEA:14801"/>
        <dbReference type="ChEBI" id="CHEBI:30616"/>
        <dbReference type="ChEBI" id="CHEBI:57604"/>
        <dbReference type="ChEBI" id="CHEBI:58272"/>
        <dbReference type="ChEBI" id="CHEBI:456216"/>
        <dbReference type="EC" id="2.7.2.3"/>
    </reaction>
</comment>
<comment type="pathway">
    <text evidence="1">Carbohydrate degradation; glycolysis; pyruvate from D-glyceraldehyde 3-phosphate: step 2/5.</text>
</comment>
<comment type="subunit">
    <text evidence="1">Monomer.</text>
</comment>
<comment type="subcellular location">
    <subcellularLocation>
        <location evidence="1">Cytoplasm</location>
    </subcellularLocation>
</comment>
<comment type="similarity">
    <text evidence="1">Belongs to the phosphoglycerate kinase family.</text>
</comment>
<keyword id="KW-0067">ATP-binding</keyword>
<keyword id="KW-0963">Cytoplasm</keyword>
<keyword id="KW-0324">Glycolysis</keyword>
<keyword id="KW-0418">Kinase</keyword>
<keyword id="KW-0547">Nucleotide-binding</keyword>
<keyword id="KW-1185">Reference proteome</keyword>
<keyword id="KW-0808">Transferase</keyword>
<gene>
    <name evidence="1" type="primary">pgk</name>
    <name type="ordered locus">SERP0443</name>
</gene>